<name>ISPF_BACC4</name>
<comment type="function">
    <text evidence="1">Involved in the biosynthesis of isopentenyl diphosphate (IPP) and dimethylallyl diphosphate (DMAPP), two major building blocks of isoprenoid compounds. Catalyzes the conversion of 4-diphosphocytidyl-2-C-methyl-D-erythritol 2-phosphate (CDP-ME2P) to 2-C-methyl-D-erythritol 2,4-cyclodiphosphate (ME-CPP) with a corresponding release of cytidine 5-monophosphate (CMP).</text>
</comment>
<comment type="catalytic activity">
    <reaction evidence="1">
        <text>4-CDP-2-C-methyl-D-erythritol 2-phosphate = 2-C-methyl-D-erythritol 2,4-cyclic diphosphate + CMP</text>
        <dbReference type="Rhea" id="RHEA:23864"/>
        <dbReference type="ChEBI" id="CHEBI:57919"/>
        <dbReference type="ChEBI" id="CHEBI:58483"/>
        <dbReference type="ChEBI" id="CHEBI:60377"/>
        <dbReference type="EC" id="4.6.1.12"/>
    </reaction>
</comment>
<comment type="cofactor">
    <cofactor evidence="1">
        <name>a divalent metal cation</name>
        <dbReference type="ChEBI" id="CHEBI:60240"/>
    </cofactor>
    <text evidence="1">Binds 1 divalent metal cation per subunit.</text>
</comment>
<comment type="pathway">
    <text evidence="1">Isoprenoid biosynthesis; isopentenyl diphosphate biosynthesis via DXP pathway; isopentenyl diphosphate from 1-deoxy-D-xylulose 5-phosphate: step 4/6.</text>
</comment>
<comment type="subunit">
    <text evidence="1">Homotrimer.</text>
</comment>
<comment type="similarity">
    <text evidence="1">Belongs to the IspF family.</text>
</comment>
<feature type="chain" id="PRO_1000117419" description="2-C-methyl-D-erythritol 2,4-cyclodiphosphate synthase">
    <location>
        <begin position="1"/>
        <end position="158"/>
    </location>
</feature>
<feature type="binding site" evidence="1">
    <location>
        <begin position="9"/>
        <end position="11"/>
    </location>
    <ligand>
        <name>4-CDP-2-C-methyl-D-erythritol 2-phosphate</name>
        <dbReference type="ChEBI" id="CHEBI:57919"/>
    </ligand>
</feature>
<feature type="binding site" evidence="1">
    <location>
        <position position="9"/>
    </location>
    <ligand>
        <name>a divalent metal cation</name>
        <dbReference type="ChEBI" id="CHEBI:60240"/>
    </ligand>
</feature>
<feature type="binding site" evidence="1">
    <location>
        <position position="11"/>
    </location>
    <ligand>
        <name>a divalent metal cation</name>
        <dbReference type="ChEBI" id="CHEBI:60240"/>
    </ligand>
</feature>
<feature type="binding site" evidence="1">
    <location>
        <begin position="35"/>
        <end position="36"/>
    </location>
    <ligand>
        <name>4-CDP-2-C-methyl-D-erythritol 2-phosphate</name>
        <dbReference type="ChEBI" id="CHEBI:57919"/>
    </ligand>
</feature>
<feature type="binding site" evidence="1">
    <location>
        <position position="43"/>
    </location>
    <ligand>
        <name>a divalent metal cation</name>
        <dbReference type="ChEBI" id="CHEBI:60240"/>
    </ligand>
</feature>
<feature type="binding site" evidence="1">
    <location>
        <begin position="57"/>
        <end position="59"/>
    </location>
    <ligand>
        <name>4-CDP-2-C-methyl-D-erythritol 2-phosphate</name>
        <dbReference type="ChEBI" id="CHEBI:57919"/>
    </ligand>
</feature>
<feature type="binding site" evidence="1">
    <location>
        <begin position="62"/>
        <end position="66"/>
    </location>
    <ligand>
        <name>4-CDP-2-C-methyl-D-erythritol 2-phosphate</name>
        <dbReference type="ChEBI" id="CHEBI:57919"/>
    </ligand>
</feature>
<feature type="binding site" evidence="1">
    <location>
        <begin position="101"/>
        <end position="107"/>
    </location>
    <ligand>
        <name>4-CDP-2-C-methyl-D-erythritol 2-phosphate</name>
        <dbReference type="ChEBI" id="CHEBI:57919"/>
    </ligand>
</feature>
<feature type="binding site" evidence="1">
    <location>
        <begin position="133"/>
        <end position="136"/>
    </location>
    <ligand>
        <name>4-CDP-2-C-methyl-D-erythritol 2-phosphate</name>
        <dbReference type="ChEBI" id="CHEBI:57919"/>
    </ligand>
</feature>
<feature type="binding site" evidence="1">
    <location>
        <position position="140"/>
    </location>
    <ligand>
        <name>4-CDP-2-C-methyl-D-erythritol 2-phosphate</name>
        <dbReference type="ChEBI" id="CHEBI:57919"/>
    </ligand>
</feature>
<feature type="binding site" evidence="1">
    <location>
        <position position="143"/>
    </location>
    <ligand>
        <name>4-CDP-2-C-methyl-D-erythritol 2-phosphate</name>
        <dbReference type="ChEBI" id="CHEBI:57919"/>
    </ligand>
</feature>
<feature type="site" description="Transition state stabilizer" evidence="1">
    <location>
        <position position="35"/>
    </location>
</feature>
<feature type="site" description="Transition state stabilizer" evidence="1">
    <location>
        <position position="134"/>
    </location>
</feature>
<protein>
    <recommendedName>
        <fullName evidence="1">2-C-methyl-D-erythritol 2,4-cyclodiphosphate synthase</fullName>
        <shortName evidence="1">MECDP-synthase</shortName>
        <shortName evidence="1">MECPP-synthase</shortName>
        <shortName evidence="1">MECPS</shortName>
        <ecNumber evidence="1">4.6.1.12</ecNumber>
    </recommendedName>
</protein>
<evidence type="ECO:0000255" key="1">
    <source>
        <dbReference type="HAMAP-Rule" id="MF_00107"/>
    </source>
</evidence>
<organism>
    <name type="scientific">Bacillus cereus (strain B4264)</name>
    <dbReference type="NCBI Taxonomy" id="405532"/>
    <lineage>
        <taxon>Bacteria</taxon>
        <taxon>Bacillati</taxon>
        <taxon>Bacillota</taxon>
        <taxon>Bacilli</taxon>
        <taxon>Bacillales</taxon>
        <taxon>Bacillaceae</taxon>
        <taxon>Bacillus</taxon>
        <taxon>Bacillus cereus group</taxon>
    </lineage>
</organism>
<gene>
    <name evidence="1" type="primary">ispF</name>
    <name type="ordered locus">BCB4264_A0107</name>
</gene>
<sequence>MFRIGQGFDVHEFAEGRPLIIGGITIPHEKGLIGHSDADVLLHTIADACLGAIAAGDIGKHFPDTDPAFKDADSAVLLQKVWGFVREQGYELGNLDCTIIAQKPKMAPHIESMRKRISELLETSIDNINVKATTTEKLGFTGREEGIASQAVVLLQKK</sequence>
<proteinExistence type="inferred from homology"/>
<dbReference type="EC" id="4.6.1.12" evidence="1"/>
<dbReference type="EMBL" id="CP001176">
    <property type="protein sequence ID" value="ACK61084.1"/>
    <property type="molecule type" value="Genomic_DNA"/>
</dbReference>
<dbReference type="RefSeq" id="WP_000488392.1">
    <property type="nucleotide sequence ID" value="NC_011725.1"/>
</dbReference>
<dbReference type="SMR" id="B7HJ25"/>
<dbReference type="KEGG" id="bcb:BCB4264_A0107"/>
<dbReference type="HOGENOM" id="CLU_084630_2_0_9"/>
<dbReference type="UniPathway" id="UPA00056">
    <property type="reaction ID" value="UER00095"/>
</dbReference>
<dbReference type="Proteomes" id="UP000007096">
    <property type="component" value="Chromosome"/>
</dbReference>
<dbReference type="GO" id="GO:0008685">
    <property type="term" value="F:2-C-methyl-D-erythritol 2,4-cyclodiphosphate synthase activity"/>
    <property type="evidence" value="ECO:0007669"/>
    <property type="project" value="UniProtKB-UniRule"/>
</dbReference>
<dbReference type="GO" id="GO:0046872">
    <property type="term" value="F:metal ion binding"/>
    <property type="evidence" value="ECO:0007669"/>
    <property type="project" value="UniProtKB-KW"/>
</dbReference>
<dbReference type="GO" id="GO:0019288">
    <property type="term" value="P:isopentenyl diphosphate biosynthetic process, methylerythritol 4-phosphate pathway"/>
    <property type="evidence" value="ECO:0007669"/>
    <property type="project" value="UniProtKB-UniRule"/>
</dbReference>
<dbReference type="GO" id="GO:0016114">
    <property type="term" value="P:terpenoid biosynthetic process"/>
    <property type="evidence" value="ECO:0007669"/>
    <property type="project" value="InterPro"/>
</dbReference>
<dbReference type="CDD" id="cd00554">
    <property type="entry name" value="MECDP_synthase"/>
    <property type="match status" value="1"/>
</dbReference>
<dbReference type="FunFam" id="3.30.1330.50:FF:000001">
    <property type="entry name" value="2-C-methyl-D-erythritol 2,4-cyclodiphosphate synthase"/>
    <property type="match status" value="1"/>
</dbReference>
<dbReference type="Gene3D" id="3.30.1330.50">
    <property type="entry name" value="2-C-methyl-D-erythritol 2,4-cyclodiphosphate synthase"/>
    <property type="match status" value="1"/>
</dbReference>
<dbReference type="HAMAP" id="MF_00107">
    <property type="entry name" value="IspF"/>
    <property type="match status" value="1"/>
</dbReference>
<dbReference type="InterPro" id="IPR003526">
    <property type="entry name" value="MECDP_synthase"/>
</dbReference>
<dbReference type="InterPro" id="IPR020555">
    <property type="entry name" value="MECDP_synthase_CS"/>
</dbReference>
<dbReference type="InterPro" id="IPR036571">
    <property type="entry name" value="MECDP_synthase_sf"/>
</dbReference>
<dbReference type="NCBIfam" id="TIGR00151">
    <property type="entry name" value="ispF"/>
    <property type="match status" value="1"/>
</dbReference>
<dbReference type="PANTHER" id="PTHR43181">
    <property type="entry name" value="2-C-METHYL-D-ERYTHRITOL 2,4-CYCLODIPHOSPHATE SYNTHASE, CHLOROPLASTIC"/>
    <property type="match status" value="1"/>
</dbReference>
<dbReference type="PANTHER" id="PTHR43181:SF1">
    <property type="entry name" value="2-C-METHYL-D-ERYTHRITOL 2,4-CYCLODIPHOSPHATE SYNTHASE, CHLOROPLASTIC"/>
    <property type="match status" value="1"/>
</dbReference>
<dbReference type="Pfam" id="PF02542">
    <property type="entry name" value="YgbB"/>
    <property type="match status" value="1"/>
</dbReference>
<dbReference type="SUPFAM" id="SSF69765">
    <property type="entry name" value="IpsF-like"/>
    <property type="match status" value="1"/>
</dbReference>
<dbReference type="PROSITE" id="PS01350">
    <property type="entry name" value="ISPF"/>
    <property type="match status" value="1"/>
</dbReference>
<accession>B7HJ25</accession>
<reference key="1">
    <citation type="submission" date="2008-10" db="EMBL/GenBank/DDBJ databases">
        <title>Genome sequence of Bacillus cereus B4264.</title>
        <authorList>
            <person name="Dodson R.J."/>
            <person name="Durkin A.S."/>
            <person name="Rosovitz M.J."/>
            <person name="Rasko D.A."/>
            <person name="Hoffmaster A."/>
            <person name="Ravel J."/>
            <person name="Sutton G."/>
        </authorList>
    </citation>
    <scope>NUCLEOTIDE SEQUENCE [LARGE SCALE GENOMIC DNA]</scope>
    <source>
        <strain>B4264</strain>
    </source>
</reference>
<keyword id="KW-0414">Isoprene biosynthesis</keyword>
<keyword id="KW-0456">Lyase</keyword>
<keyword id="KW-0479">Metal-binding</keyword>